<sequence length="249" mass="28242">MFGLKAKSTKKVFGGIPKHIGIIMDGNGRWAKKRLKPRVFGHKAGMDALQEVTITASELGVKVLTVYAFSTENWSRPQDEVSFIMNLPVTFFDKYVPVLHENNVKIQMIGETSRLPEDTLAALNAAIDKTKRNTGLILNFALNYGGRAEITSAVRFIAQDVLDAKLNPGDITEDLIANYLMTDHLPYLYRDPDLIIRTSGELRLSNFLPWQSAYSEFYFTPVLWPDFKKAELLKAIADYNHRQRRFGKV</sequence>
<accession>P0DH32</accession>
<accession>Q8K5S5</accession>
<reference key="1">
    <citation type="journal article" date="2002" name="Proc. Natl. Acad. Sci. U.S.A.">
        <title>Genome sequence of a serotype M3 strain of group A Streptococcus: phage-encoded toxins, the high-virulence phenotype, and clone emergence.</title>
        <authorList>
            <person name="Beres S.B."/>
            <person name="Sylva G.L."/>
            <person name="Barbian K.D."/>
            <person name="Lei B."/>
            <person name="Hoff J.S."/>
            <person name="Mammarella N.D."/>
            <person name="Liu M.-Y."/>
            <person name="Smoot J.C."/>
            <person name="Porcella S.F."/>
            <person name="Parkins L.D."/>
            <person name="Campbell D.S."/>
            <person name="Smith T.M."/>
            <person name="McCormick J.K."/>
            <person name="Leung D.Y.M."/>
            <person name="Schlievert P.M."/>
            <person name="Musser J.M."/>
        </authorList>
    </citation>
    <scope>NUCLEOTIDE SEQUENCE [LARGE SCALE GENOMIC DNA]</scope>
    <source>
        <strain>ATCC BAA-595 / MGAS315</strain>
    </source>
</reference>
<feature type="chain" id="PRO_0000123693" description="Isoprenyl transferase">
    <location>
        <begin position="1"/>
        <end position="249"/>
    </location>
</feature>
<feature type="active site" evidence="1">
    <location>
        <position position="25"/>
    </location>
</feature>
<feature type="active site" description="Proton acceptor" evidence="1">
    <location>
        <position position="73"/>
    </location>
</feature>
<feature type="binding site" evidence="1">
    <location>
        <position position="25"/>
    </location>
    <ligand>
        <name>Mg(2+)</name>
        <dbReference type="ChEBI" id="CHEBI:18420"/>
    </ligand>
</feature>
<feature type="binding site" evidence="1">
    <location>
        <begin position="26"/>
        <end position="29"/>
    </location>
    <ligand>
        <name>substrate</name>
    </ligand>
</feature>
<feature type="binding site" evidence="1">
    <location>
        <position position="30"/>
    </location>
    <ligand>
        <name>substrate</name>
    </ligand>
</feature>
<feature type="binding site" evidence="1">
    <location>
        <position position="38"/>
    </location>
    <ligand>
        <name>substrate</name>
    </ligand>
</feature>
<feature type="binding site" evidence="1">
    <location>
        <position position="42"/>
    </location>
    <ligand>
        <name>substrate</name>
    </ligand>
</feature>
<feature type="binding site" evidence="1">
    <location>
        <begin position="70"/>
        <end position="72"/>
    </location>
    <ligand>
        <name>substrate</name>
    </ligand>
</feature>
<feature type="binding site" evidence="1">
    <location>
        <position position="74"/>
    </location>
    <ligand>
        <name>substrate</name>
    </ligand>
</feature>
<feature type="binding site" evidence="1">
    <location>
        <position position="76"/>
    </location>
    <ligand>
        <name>substrate</name>
    </ligand>
</feature>
<feature type="binding site" evidence="1">
    <location>
        <position position="197"/>
    </location>
    <ligand>
        <name>substrate</name>
    </ligand>
</feature>
<feature type="binding site" evidence="1">
    <location>
        <begin position="203"/>
        <end position="205"/>
    </location>
    <ligand>
        <name>substrate</name>
    </ligand>
</feature>
<feature type="binding site" evidence="1">
    <location>
        <position position="216"/>
    </location>
    <ligand>
        <name>Mg(2+)</name>
        <dbReference type="ChEBI" id="CHEBI:18420"/>
    </ligand>
</feature>
<gene>
    <name evidence="1" type="primary">uppS</name>
    <name type="ordered locus">SpyM3_1691</name>
</gene>
<evidence type="ECO:0000255" key="1">
    <source>
        <dbReference type="HAMAP-Rule" id="MF_01139"/>
    </source>
</evidence>
<proteinExistence type="inferred from homology"/>
<protein>
    <recommendedName>
        <fullName evidence="1">Isoprenyl transferase</fullName>
        <ecNumber evidence="1">2.5.1.-</ecNumber>
    </recommendedName>
</protein>
<organism>
    <name type="scientific">Streptococcus pyogenes serotype M3 (strain ATCC BAA-595 / MGAS315)</name>
    <dbReference type="NCBI Taxonomy" id="198466"/>
    <lineage>
        <taxon>Bacteria</taxon>
        <taxon>Bacillati</taxon>
        <taxon>Bacillota</taxon>
        <taxon>Bacilli</taxon>
        <taxon>Lactobacillales</taxon>
        <taxon>Streptococcaceae</taxon>
        <taxon>Streptococcus</taxon>
    </lineage>
</organism>
<dbReference type="EC" id="2.5.1.-" evidence="1"/>
<dbReference type="EMBL" id="AE014074">
    <property type="protein sequence ID" value="AAM80298.1"/>
    <property type="molecule type" value="Genomic_DNA"/>
</dbReference>
<dbReference type="RefSeq" id="WP_011055023.1">
    <property type="nucleotide sequence ID" value="NC_004070.1"/>
</dbReference>
<dbReference type="SMR" id="P0DH32"/>
<dbReference type="KEGG" id="spg:SpyM3_1691"/>
<dbReference type="HOGENOM" id="CLU_038505_1_1_9"/>
<dbReference type="Proteomes" id="UP000000564">
    <property type="component" value="Chromosome"/>
</dbReference>
<dbReference type="GO" id="GO:0005829">
    <property type="term" value="C:cytosol"/>
    <property type="evidence" value="ECO:0007669"/>
    <property type="project" value="TreeGrafter"/>
</dbReference>
<dbReference type="GO" id="GO:0008834">
    <property type="term" value="F:ditrans,polycis-undecaprenyl-diphosphate synthase [(2E,6E)-farnesyl-diphosphate specific] activity"/>
    <property type="evidence" value="ECO:0007669"/>
    <property type="project" value="TreeGrafter"/>
</dbReference>
<dbReference type="GO" id="GO:0000287">
    <property type="term" value="F:magnesium ion binding"/>
    <property type="evidence" value="ECO:0007669"/>
    <property type="project" value="UniProtKB-UniRule"/>
</dbReference>
<dbReference type="GO" id="GO:0030145">
    <property type="term" value="F:manganese ion binding"/>
    <property type="evidence" value="ECO:0007669"/>
    <property type="project" value="TreeGrafter"/>
</dbReference>
<dbReference type="GO" id="GO:0016094">
    <property type="term" value="P:polyprenol biosynthetic process"/>
    <property type="evidence" value="ECO:0007669"/>
    <property type="project" value="TreeGrafter"/>
</dbReference>
<dbReference type="CDD" id="cd00475">
    <property type="entry name" value="Cis_IPPS"/>
    <property type="match status" value="1"/>
</dbReference>
<dbReference type="FunFam" id="3.40.1180.10:FF:000001">
    <property type="entry name" value="(2E,6E)-farnesyl-diphosphate-specific ditrans,polycis-undecaprenyl-diphosphate synthase"/>
    <property type="match status" value="1"/>
</dbReference>
<dbReference type="Gene3D" id="3.40.1180.10">
    <property type="entry name" value="Decaprenyl diphosphate synthase-like"/>
    <property type="match status" value="1"/>
</dbReference>
<dbReference type="HAMAP" id="MF_01139">
    <property type="entry name" value="ISPT"/>
    <property type="match status" value="1"/>
</dbReference>
<dbReference type="InterPro" id="IPR001441">
    <property type="entry name" value="UPP_synth-like"/>
</dbReference>
<dbReference type="InterPro" id="IPR018520">
    <property type="entry name" value="UPP_synth-like_CS"/>
</dbReference>
<dbReference type="InterPro" id="IPR036424">
    <property type="entry name" value="UPP_synth-like_sf"/>
</dbReference>
<dbReference type="NCBIfam" id="NF011405">
    <property type="entry name" value="PRK14830.1"/>
    <property type="match status" value="1"/>
</dbReference>
<dbReference type="NCBIfam" id="TIGR00055">
    <property type="entry name" value="uppS"/>
    <property type="match status" value="1"/>
</dbReference>
<dbReference type="PANTHER" id="PTHR10291:SF0">
    <property type="entry name" value="DEHYDRODOLICHYL DIPHOSPHATE SYNTHASE 2"/>
    <property type="match status" value="1"/>
</dbReference>
<dbReference type="PANTHER" id="PTHR10291">
    <property type="entry name" value="DEHYDRODOLICHYL DIPHOSPHATE SYNTHASE FAMILY MEMBER"/>
    <property type="match status" value="1"/>
</dbReference>
<dbReference type="Pfam" id="PF01255">
    <property type="entry name" value="Prenyltransf"/>
    <property type="match status" value="1"/>
</dbReference>
<dbReference type="SUPFAM" id="SSF64005">
    <property type="entry name" value="Undecaprenyl diphosphate synthase"/>
    <property type="match status" value="1"/>
</dbReference>
<dbReference type="PROSITE" id="PS01066">
    <property type="entry name" value="UPP_SYNTHASE"/>
    <property type="match status" value="1"/>
</dbReference>
<keyword id="KW-0460">Magnesium</keyword>
<keyword id="KW-0479">Metal-binding</keyword>
<keyword id="KW-0808">Transferase</keyword>
<name>ISPT_STRP3</name>
<comment type="function">
    <text evidence="1">Catalyzes the condensation of isopentenyl diphosphate (IPP) with allylic pyrophosphates generating different type of terpenoids.</text>
</comment>
<comment type="cofactor">
    <cofactor evidence="1">
        <name>Mg(2+)</name>
        <dbReference type="ChEBI" id="CHEBI:18420"/>
    </cofactor>
    <text evidence="1">Binds 2 magnesium ions per subunit.</text>
</comment>
<comment type="subunit">
    <text evidence="1">Homodimer.</text>
</comment>
<comment type="similarity">
    <text evidence="1">Belongs to the UPP synthase family.</text>
</comment>